<keyword id="KW-0067">ATP-binding</keyword>
<keyword id="KW-0375">Hydrogen ion transport</keyword>
<keyword id="KW-0406">Ion transport</keyword>
<keyword id="KW-0547">Nucleotide-binding</keyword>
<keyword id="KW-1278">Translocase</keyword>
<keyword id="KW-0813">Transport</keyword>
<feature type="chain" id="PRO_0000144587" description="V-type proton ATPase catalytic subunit A isoform 2">
    <location>
        <begin position="1" status="less than"/>
        <end position="30" status="greater than"/>
    </location>
</feature>
<feature type="non-terminal residue">
    <location>
        <position position="1"/>
    </location>
</feature>
<feature type="non-terminal residue">
    <location>
        <position position="30"/>
    </location>
</feature>
<protein>
    <recommendedName>
        <fullName>V-type proton ATPase catalytic subunit A isoform 2</fullName>
        <shortName>V-ATPase subunit A 2</shortName>
    </recommendedName>
    <alternativeName>
        <fullName>Vacuolar proton pump subunit alpha 2</fullName>
        <ecNumber>7.1.2.2</ecNumber>
    </alternativeName>
</protein>
<comment type="function">
    <text>Catalytic subunit of the peripheral V1 complex of vacuolar ATPase. V-ATPase vacuolar ATPase is responsible for acidifying a variety of intracellular compartments in eukaryotic cells.</text>
</comment>
<comment type="catalytic activity">
    <reaction evidence="1">
        <text>ATP + H2O + 4 H(+)(in) = ADP + phosphate + 5 H(+)(out)</text>
        <dbReference type="Rhea" id="RHEA:57720"/>
        <dbReference type="ChEBI" id="CHEBI:15377"/>
        <dbReference type="ChEBI" id="CHEBI:15378"/>
        <dbReference type="ChEBI" id="CHEBI:30616"/>
        <dbReference type="ChEBI" id="CHEBI:43474"/>
        <dbReference type="ChEBI" id="CHEBI:456216"/>
        <dbReference type="EC" id="7.1.2.2"/>
    </reaction>
</comment>
<comment type="subunit">
    <text>V-ATPase is a heteromultimeric enzyme composed of a peripheral catalytic V1 complex (main components: subunits A, B, C, D, E, and F) attached to an integral membrane V0 proton pore complex (main component: the proteolipid protein).</text>
</comment>
<comment type="similarity">
    <text evidence="2">Belongs to the ATPase alpha/beta chains family.</text>
</comment>
<reference key="1">
    <citation type="journal article" date="1993" name="FEBS Lett.">
        <title>A conserved intron in the V-ATPase A subunit genes of plants and algae.</title>
        <authorList>
            <person name="Starke T."/>
            <person name="Gogarten J.P."/>
        </authorList>
    </citation>
    <scope>NUCLEOTIDE SEQUENCE [GENOMIC DNA]</scope>
</reference>
<proteinExistence type="inferred from homology"/>
<name>VATA2_PSINU</name>
<evidence type="ECO:0000255" key="1">
    <source>
        <dbReference type="PROSITE-ProRule" id="PRU10106"/>
    </source>
</evidence>
<evidence type="ECO:0000305" key="2"/>
<accession>Q04239</accession>
<organism>
    <name type="scientific">Psilotum nudum</name>
    <name type="common">Whisk fern</name>
    <name type="synonym">Lycopodium nudum</name>
    <dbReference type="NCBI Taxonomy" id="3240"/>
    <lineage>
        <taxon>Eukaryota</taxon>
        <taxon>Viridiplantae</taxon>
        <taxon>Streptophyta</taxon>
        <taxon>Embryophyta</taxon>
        <taxon>Tracheophyta</taxon>
        <taxon>Polypodiopsida</taxon>
        <taxon>Ophioglossidae</taxon>
        <taxon>Psilotales</taxon>
        <taxon>Psilotaceae</taxon>
        <taxon>Psilotum</taxon>
    </lineage>
</organism>
<dbReference type="EC" id="7.1.2.2"/>
<dbReference type="EMBL" id="X56986">
    <property type="protein sequence ID" value="CAA40304.1"/>
    <property type="molecule type" value="Genomic_DNA"/>
</dbReference>
<dbReference type="PIR" id="S21816">
    <property type="entry name" value="S21816"/>
</dbReference>
<dbReference type="GO" id="GO:0005524">
    <property type="term" value="F:ATP binding"/>
    <property type="evidence" value="ECO:0007669"/>
    <property type="project" value="UniProtKB-KW"/>
</dbReference>
<dbReference type="GO" id="GO:1902600">
    <property type="term" value="P:proton transmembrane transport"/>
    <property type="evidence" value="ECO:0007669"/>
    <property type="project" value="UniProtKB-KW"/>
</dbReference>
<sequence length="30" mass="3380">AEVLMDFPQLTMTLPDGREESVMKRTTLVA</sequence>